<evidence type="ECO:0000255" key="1">
    <source>
        <dbReference type="HAMAP-Rule" id="MF_01819"/>
    </source>
</evidence>
<evidence type="ECO:0000269" key="2">
    <source>
    </source>
</evidence>
<evidence type="ECO:0000269" key="3">
    <source>
    </source>
</evidence>
<name>SLYA_YEREN</name>
<organism>
    <name type="scientific">Yersinia enterocolitica</name>
    <dbReference type="NCBI Taxonomy" id="630"/>
    <lineage>
        <taxon>Bacteria</taxon>
        <taxon>Pseudomonadati</taxon>
        <taxon>Pseudomonadota</taxon>
        <taxon>Gammaproteobacteria</taxon>
        <taxon>Enterobacterales</taxon>
        <taxon>Yersiniaceae</taxon>
        <taxon>Yersinia</taxon>
    </lineage>
</organism>
<keyword id="KW-0010">Activator</keyword>
<keyword id="KW-0238">DNA-binding</keyword>
<keyword id="KW-0678">Repressor</keyword>
<keyword id="KW-0804">Transcription</keyword>
<keyword id="KW-0805">Transcription regulation</keyword>
<keyword id="KW-0843">Virulence</keyword>
<dbReference type="EMBL" id="AF171097">
    <property type="protein sequence ID" value="AAD51968.1"/>
    <property type="molecule type" value="Genomic_DNA"/>
</dbReference>
<dbReference type="RefSeq" id="WP_004706617.1">
    <property type="nucleotide sequence ID" value="NZ_UHIX01000001.1"/>
</dbReference>
<dbReference type="SMR" id="Q9S3W0"/>
<dbReference type="STRING" id="1443113.LC20_02898"/>
<dbReference type="GeneID" id="93972264"/>
<dbReference type="eggNOG" id="COG1846">
    <property type="taxonomic scope" value="Bacteria"/>
</dbReference>
<dbReference type="GO" id="GO:0003677">
    <property type="term" value="F:DNA binding"/>
    <property type="evidence" value="ECO:0007669"/>
    <property type="project" value="UniProtKB-UniRule"/>
</dbReference>
<dbReference type="GO" id="GO:0003700">
    <property type="term" value="F:DNA-binding transcription factor activity"/>
    <property type="evidence" value="ECO:0007669"/>
    <property type="project" value="UniProtKB-UniRule"/>
</dbReference>
<dbReference type="GO" id="GO:0006950">
    <property type="term" value="P:response to stress"/>
    <property type="evidence" value="ECO:0007669"/>
    <property type="project" value="TreeGrafter"/>
</dbReference>
<dbReference type="FunFam" id="1.10.10.10:FF:000261">
    <property type="entry name" value="Transcriptional regulator SlyA"/>
    <property type="match status" value="1"/>
</dbReference>
<dbReference type="Gene3D" id="1.10.10.10">
    <property type="entry name" value="Winged helix-like DNA-binding domain superfamily/Winged helix DNA-binding domain"/>
    <property type="match status" value="1"/>
</dbReference>
<dbReference type="HAMAP" id="MF_01819">
    <property type="entry name" value="HTH_type_SlyA"/>
    <property type="match status" value="1"/>
</dbReference>
<dbReference type="InterPro" id="IPR000835">
    <property type="entry name" value="HTH_MarR-typ"/>
</dbReference>
<dbReference type="InterPro" id="IPR039422">
    <property type="entry name" value="MarR/SlyA-like"/>
</dbReference>
<dbReference type="InterPro" id="IPR023187">
    <property type="entry name" value="Tscrpt_reg_MarR-type_CS"/>
</dbReference>
<dbReference type="InterPro" id="IPR023071">
    <property type="entry name" value="Tscrpt_reg_SlyA"/>
</dbReference>
<dbReference type="InterPro" id="IPR036388">
    <property type="entry name" value="WH-like_DNA-bd_sf"/>
</dbReference>
<dbReference type="InterPro" id="IPR036390">
    <property type="entry name" value="WH_DNA-bd_sf"/>
</dbReference>
<dbReference type="NCBIfam" id="NF002926">
    <property type="entry name" value="PRK03573.1"/>
    <property type="match status" value="1"/>
</dbReference>
<dbReference type="PANTHER" id="PTHR33164:SF64">
    <property type="entry name" value="TRANSCRIPTIONAL REGULATOR SLYA"/>
    <property type="match status" value="1"/>
</dbReference>
<dbReference type="PANTHER" id="PTHR33164">
    <property type="entry name" value="TRANSCRIPTIONAL REGULATOR, MARR FAMILY"/>
    <property type="match status" value="1"/>
</dbReference>
<dbReference type="Pfam" id="PF01047">
    <property type="entry name" value="MarR"/>
    <property type="match status" value="1"/>
</dbReference>
<dbReference type="PRINTS" id="PR00598">
    <property type="entry name" value="HTHMARR"/>
</dbReference>
<dbReference type="SMART" id="SM00347">
    <property type="entry name" value="HTH_MARR"/>
    <property type="match status" value="1"/>
</dbReference>
<dbReference type="SUPFAM" id="SSF46785">
    <property type="entry name" value="Winged helix' DNA-binding domain"/>
    <property type="match status" value="1"/>
</dbReference>
<dbReference type="PROSITE" id="PS01117">
    <property type="entry name" value="HTH_MARR_1"/>
    <property type="match status" value="1"/>
</dbReference>
<dbReference type="PROSITE" id="PS50995">
    <property type="entry name" value="HTH_MARR_2"/>
    <property type="match status" value="1"/>
</dbReference>
<gene>
    <name evidence="1" type="primary">slyA</name>
    <name type="synonym">rovA</name>
</gene>
<sequence>MESTLGSDLARLVRVWRALIDHRLKPLELTQTHWVTLHNINRLPPEQSQIQLAKAIGIEQPSLVRTLDQLEEKGLITRHTCANDRRAKRIKLTEQSSPIIEQVDGVICSTRKEILGGISPDEIELLSGLIDKLERNIIQLQSK</sequence>
<reference key="1">
    <citation type="journal article" date="2000" name="Mol. Microbiol.">
        <title>A chromosomally encoded regulator is required for expression of the Yersinia enterocolitica inv gene and for virulence.</title>
        <authorList>
            <person name="Revell P.A."/>
            <person name="Miller V.L."/>
        </authorList>
    </citation>
    <scope>NUCLEOTIDE SEQUENCE [GENOMIC DNA]</scope>
    <scope>FUNCTION</scope>
    <source>
        <strain>JB580v / Serotype O:8</strain>
    </source>
</reference>
<reference key="2">
    <citation type="journal article" date="2003" name="Infect. Immun.">
        <title>The rovA mutant of Yersinia enterocolitica displays differential degrees of virulence depending on the route of infection.</title>
        <authorList>
            <person name="Dube P.H."/>
            <person name="Handley S.A."/>
            <person name="Revell P.A."/>
            <person name="Miller V.L."/>
        </authorList>
    </citation>
    <scope>FUNCTION</scope>
</reference>
<protein>
    <recommendedName>
        <fullName evidence="1">Transcriptional regulator SlyA</fullName>
    </recommendedName>
    <alternativeName>
        <fullName>Regulator of virulence protein A</fullName>
    </alternativeName>
</protein>
<accession>Q9S3W0</accession>
<feature type="chain" id="PRO_0000054397" description="Transcriptional regulator SlyA">
    <location>
        <begin position="1"/>
        <end position="143"/>
    </location>
</feature>
<feature type="domain" description="HTH marR-type" evidence="1">
    <location>
        <begin position="2"/>
        <end position="135"/>
    </location>
</feature>
<feature type="DNA-binding region" description="H-T-H motif" evidence="1">
    <location>
        <begin position="49"/>
        <end position="72"/>
    </location>
</feature>
<comment type="function">
    <text evidence="1 2 3">Transcription regulator that can specifically activate or repress expression of target genes. Required for expression of the virulence gene inv. Important for the regulation of genes that influence the early stages of infection that occur in the Peyer plaque.</text>
</comment>
<comment type="subunit">
    <text evidence="1">Homodimer.</text>
</comment>
<comment type="similarity">
    <text evidence="1">Belongs to the SlyA family.</text>
</comment>
<proteinExistence type="inferred from homology"/>